<keyword id="KW-0143">Chaperone</keyword>
<keyword id="KW-0479">Metal-binding</keyword>
<keyword id="KW-1185">Reference proteome</keyword>
<keyword id="KW-0677">Repeat</keyword>
<keyword id="KW-0862">Zinc</keyword>
<keyword id="KW-0863">Zinc-finger</keyword>
<reference key="1">
    <citation type="journal article" date="2004" name="Science">
        <title>The 1.2-megabase genome sequence of Mimivirus.</title>
        <authorList>
            <person name="Raoult D."/>
            <person name="Audic S."/>
            <person name="Robert C."/>
            <person name="Abergel C."/>
            <person name="Renesto P."/>
            <person name="Ogata H."/>
            <person name="La Scola B."/>
            <person name="Susan M."/>
            <person name="Claverie J.-M."/>
        </authorList>
    </citation>
    <scope>NUCLEOTIDE SEQUENCE [LARGE SCALE GENOMIC DNA]</scope>
    <source>
        <strain>Rowbotham-Bradford</strain>
    </source>
</reference>
<protein>
    <recommendedName>
        <fullName>DnaJ-like protein R260</fullName>
    </recommendedName>
</protein>
<comment type="cofactor">
    <cofactor evidence="1">
        <name>Zn(2+)</name>
        <dbReference type="ChEBI" id="CHEBI:29105"/>
    </cofactor>
    <text evidence="1">Binds 2 Zn(2+) ions per monomer.</text>
</comment>
<name>YR260_MIMIV</name>
<feature type="chain" id="PRO_0000071165" description="DnaJ-like protein R260">
    <location>
        <begin position="1"/>
        <end position="398"/>
    </location>
</feature>
<feature type="domain" description="J" evidence="2">
    <location>
        <begin position="7"/>
        <end position="72"/>
    </location>
</feature>
<feature type="repeat" description="CXXCXGXG motif">
    <location>
        <begin position="131"/>
        <end position="138"/>
    </location>
</feature>
<feature type="repeat" description="CXXCXGXG motif">
    <location>
        <begin position="147"/>
        <end position="154"/>
    </location>
</feature>
<feature type="repeat" description="CXXCXGXG motif">
    <location>
        <begin position="173"/>
        <end position="180"/>
    </location>
</feature>
<feature type="repeat" description="CXXCXGXG motif">
    <location>
        <begin position="190"/>
        <end position="197"/>
    </location>
</feature>
<feature type="zinc finger region" description="CR-type" evidence="3">
    <location>
        <begin position="118"/>
        <end position="202"/>
    </location>
</feature>
<feature type="region of interest" description="Disordered" evidence="4">
    <location>
        <begin position="364"/>
        <end position="398"/>
    </location>
</feature>
<feature type="compositionally biased region" description="Acidic residues" evidence="4">
    <location>
        <begin position="371"/>
        <end position="382"/>
    </location>
</feature>
<accession>Q5UP23</accession>
<proteinExistence type="inferred from homology"/>
<organism>
    <name type="scientific">Acanthamoeba polyphaga mimivirus</name>
    <name type="common">APMV</name>
    <dbReference type="NCBI Taxonomy" id="212035"/>
    <lineage>
        <taxon>Viruses</taxon>
        <taxon>Varidnaviria</taxon>
        <taxon>Bamfordvirae</taxon>
        <taxon>Nucleocytoviricota</taxon>
        <taxon>Megaviricetes</taxon>
        <taxon>Imitervirales</taxon>
        <taxon>Mimiviridae</taxon>
        <taxon>Megamimivirinae</taxon>
        <taxon>Mimivirus</taxon>
        <taxon>Mimivirus bradfordmassiliense</taxon>
    </lineage>
</organism>
<evidence type="ECO:0000250" key="1"/>
<evidence type="ECO:0000255" key="2">
    <source>
        <dbReference type="PROSITE-ProRule" id="PRU00286"/>
    </source>
</evidence>
<evidence type="ECO:0000255" key="3">
    <source>
        <dbReference type="PROSITE-ProRule" id="PRU00546"/>
    </source>
</evidence>
<evidence type="ECO:0000256" key="4">
    <source>
        <dbReference type="SAM" id="MobiDB-lite"/>
    </source>
</evidence>
<gene>
    <name type="ordered locus">MIMI_R260</name>
</gene>
<sequence length="398" mass="45201">MNKESTDLYEILGLTPSASEEDIKKAYRKLAIKYHPDKNKGNPEAEEMFKKINHANSILSNSEKRRVYDQYGEEAVNNGLNEDSFDPMSMFMRMHQPGNKKLRAQMRHQISLQDYFTKKTVKVTITVDSKCDDCDATGFSDKQKHVCKVCRGKGIVVNEIRNGPFIQQIQQHCHGCQGKKYDTTAKDLHCPSCKGAGINKSEEETEVNVPFDILRNPKVILEGKGPWVDGKNIDLEIVFILAFSDGFELTDNHKLIYTMEINFPETLCGFRRIIDHPSGDSLLIVANPGFVINPHYIYLLERKGLNNDTLYLKFKINYSKLIHIPKKKVFNFENLEIALGTRYVPDVSDDIGTEPENVFNLSTLRQINTDPSDESQDRDSEESYGGHGRPEGVGCAQQ</sequence>
<organismHost>
    <name type="scientific">Acanthamoeba polyphaga</name>
    <name type="common">Amoeba</name>
    <dbReference type="NCBI Taxonomy" id="5757"/>
</organismHost>
<dbReference type="EMBL" id="AY653733">
    <property type="protein sequence ID" value="AAV50532.1"/>
    <property type="molecule type" value="Genomic_DNA"/>
</dbReference>
<dbReference type="SMR" id="Q5UP23"/>
<dbReference type="KEGG" id="vg:9924869"/>
<dbReference type="OrthoDB" id="9756at10239"/>
<dbReference type="Proteomes" id="UP000001134">
    <property type="component" value="Genome"/>
</dbReference>
<dbReference type="GO" id="GO:0030544">
    <property type="term" value="F:Hsp70 protein binding"/>
    <property type="evidence" value="ECO:0007669"/>
    <property type="project" value="InterPro"/>
</dbReference>
<dbReference type="GO" id="GO:0051082">
    <property type="term" value="F:unfolded protein binding"/>
    <property type="evidence" value="ECO:0007669"/>
    <property type="project" value="InterPro"/>
</dbReference>
<dbReference type="GO" id="GO:0008270">
    <property type="term" value="F:zinc ion binding"/>
    <property type="evidence" value="ECO:0007669"/>
    <property type="project" value="UniProtKB-KW"/>
</dbReference>
<dbReference type="GO" id="GO:0006457">
    <property type="term" value="P:protein folding"/>
    <property type="evidence" value="ECO:0007669"/>
    <property type="project" value="InterPro"/>
</dbReference>
<dbReference type="CDD" id="cd06257">
    <property type="entry name" value="DnaJ"/>
    <property type="match status" value="1"/>
</dbReference>
<dbReference type="CDD" id="cd10719">
    <property type="entry name" value="DnaJ_zf"/>
    <property type="match status" value="1"/>
</dbReference>
<dbReference type="FunFam" id="2.10.230.10:FF:000001">
    <property type="entry name" value="DnaJ subfamily A member 2"/>
    <property type="match status" value="1"/>
</dbReference>
<dbReference type="Gene3D" id="1.10.287.110">
    <property type="entry name" value="DnaJ domain"/>
    <property type="match status" value="1"/>
</dbReference>
<dbReference type="Gene3D" id="2.10.230.10">
    <property type="entry name" value="Heat shock protein DnaJ, cysteine-rich domain"/>
    <property type="match status" value="1"/>
</dbReference>
<dbReference type="Gene3D" id="2.60.260.20">
    <property type="entry name" value="Urease metallochaperone UreE, N-terminal domain"/>
    <property type="match status" value="2"/>
</dbReference>
<dbReference type="InterPro" id="IPR002939">
    <property type="entry name" value="DnaJ_C"/>
</dbReference>
<dbReference type="InterPro" id="IPR001623">
    <property type="entry name" value="DnaJ_domain"/>
</dbReference>
<dbReference type="InterPro" id="IPR018253">
    <property type="entry name" value="DnaJ_domain_CS"/>
</dbReference>
<dbReference type="InterPro" id="IPR044713">
    <property type="entry name" value="DNJA1/2-like"/>
</dbReference>
<dbReference type="InterPro" id="IPR008971">
    <property type="entry name" value="HSP40/DnaJ_pept-bd"/>
</dbReference>
<dbReference type="InterPro" id="IPR001305">
    <property type="entry name" value="HSP_DnaJ_Cys-rich_dom"/>
</dbReference>
<dbReference type="InterPro" id="IPR036410">
    <property type="entry name" value="HSP_DnaJ_Cys-rich_dom_sf"/>
</dbReference>
<dbReference type="InterPro" id="IPR036869">
    <property type="entry name" value="J_dom_sf"/>
</dbReference>
<dbReference type="PANTHER" id="PTHR43888">
    <property type="entry name" value="DNAJ-LIKE-2, ISOFORM A-RELATED"/>
    <property type="match status" value="1"/>
</dbReference>
<dbReference type="Pfam" id="PF00226">
    <property type="entry name" value="DnaJ"/>
    <property type="match status" value="1"/>
</dbReference>
<dbReference type="Pfam" id="PF01556">
    <property type="entry name" value="DnaJ_C"/>
    <property type="match status" value="1"/>
</dbReference>
<dbReference type="Pfam" id="PF00684">
    <property type="entry name" value="DnaJ_CXXCXGXG"/>
    <property type="match status" value="1"/>
</dbReference>
<dbReference type="PRINTS" id="PR00625">
    <property type="entry name" value="JDOMAIN"/>
</dbReference>
<dbReference type="SMART" id="SM00271">
    <property type="entry name" value="DnaJ"/>
    <property type="match status" value="1"/>
</dbReference>
<dbReference type="SUPFAM" id="SSF46565">
    <property type="entry name" value="Chaperone J-domain"/>
    <property type="match status" value="1"/>
</dbReference>
<dbReference type="SUPFAM" id="SSF57938">
    <property type="entry name" value="DnaJ/Hsp40 cysteine-rich domain"/>
    <property type="match status" value="1"/>
</dbReference>
<dbReference type="SUPFAM" id="SSF49493">
    <property type="entry name" value="HSP40/DnaJ peptide-binding domain"/>
    <property type="match status" value="1"/>
</dbReference>
<dbReference type="PROSITE" id="PS00636">
    <property type="entry name" value="DNAJ_1"/>
    <property type="match status" value="1"/>
</dbReference>
<dbReference type="PROSITE" id="PS50076">
    <property type="entry name" value="DNAJ_2"/>
    <property type="match status" value="1"/>
</dbReference>
<dbReference type="PROSITE" id="PS51188">
    <property type="entry name" value="ZF_CR"/>
    <property type="match status" value="1"/>
</dbReference>